<reference key="1">
    <citation type="journal article" date="2008" name="BMC Genomics">
        <title>The genome of Aeromonas salmonicida subsp. salmonicida A449: insights into the evolution of a fish pathogen.</title>
        <authorList>
            <person name="Reith M.E."/>
            <person name="Singh R.K."/>
            <person name="Curtis B."/>
            <person name="Boyd J.M."/>
            <person name="Bouevitch A."/>
            <person name="Kimball J."/>
            <person name="Munholland J."/>
            <person name="Murphy C."/>
            <person name="Sarty D."/>
            <person name="Williams J."/>
            <person name="Nash J.H."/>
            <person name="Johnson S.C."/>
            <person name="Brown L.L."/>
        </authorList>
    </citation>
    <scope>NUCLEOTIDE SEQUENCE [LARGE SCALE GENOMIC DNA]</scope>
    <source>
        <strain>A449</strain>
    </source>
</reference>
<comment type="function">
    <text evidence="1">Bifunctional serine/threonine kinase and phosphorylase involved in the regulation of the phosphoenolpyruvate synthase (PEPS) by catalyzing its phosphorylation/dephosphorylation.</text>
</comment>
<comment type="catalytic activity">
    <reaction evidence="1">
        <text>[pyruvate, water dikinase] + ADP = [pyruvate, water dikinase]-phosphate + AMP + H(+)</text>
        <dbReference type="Rhea" id="RHEA:46020"/>
        <dbReference type="Rhea" id="RHEA-COMP:11425"/>
        <dbReference type="Rhea" id="RHEA-COMP:11426"/>
        <dbReference type="ChEBI" id="CHEBI:15378"/>
        <dbReference type="ChEBI" id="CHEBI:43176"/>
        <dbReference type="ChEBI" id="CHEBI:68546"/>
        <dbReference type="ChEBI" id="CHEBI:456215"/>
        <dbReference type="ChEBI" id="CHEBI:456216"/>
        <dbReference type="EC" id="2.7.11.33"/>
    </reaction>
</comment>
<comment type="catalytic activity">
    <reaction evidence="1">
        <text>[pyruvate, water dikinase]-phosphate + phosphate + H(+) = [pyruvate, water dikinase] + diphosphate</text>
        <dbReference type="Rhea" id="RHEA:48580"/>
        <dbReference type="Rhea" id="RHEA-COMP:11425"/>
        <dbReference type="Rhea" id="RHEA-COMP:11426"/>
        <dbReference type="ChEBI" id="CHEBI:15378"/>
        <dbReference type="ChEBI" id="CHEBI:33019"/>
        <dbReference type="ChEBI" id="CHEBI:43176"/>
        <dbReference type="ChEBI" id="CHEBI:43474"/>
        <dbReference type="ChEBI" id="CHEBI:68546"/>
        <dbReference type="EC" id="2.7.4.28"/>
    </reaction>
</comment>
<comment type="similarity">
    <text evidence="1">Belongs to the pyruvate, phosphate/water dikinase regulatory protein family. PSRP subfamily.</text>
</comment>
<dbReference type="EC" id="2.7.11.33" evidence="1"/>
<dbReference type="EC" id="2.7.4.28" evidence="1"/>
<dbReference type="EMBL" id="CP000644">
    <property type="protein sequence ID" value="ABO90574.1"/>
    <property type="molecule type" value="Genomic_DNA"/>
</dbReference>
<dbReference type="RefSeq" id="WP_005310537.1">
    <property type="nucleotide sequence ID" value="NC_009348.1"/>
</dbReference>
<dbReference type="SMR" id="A4SNV2"/>
<dbReference type="STRING" id="29491.GCA_000820065_00727"/>
<dbReference type="KEGG" id="asa:ASA_2545"/>
<dbReference type="eggNOG" id="COG1806">
    <property type="taxonomic scope" value="Bacteria"/>
</dbReference>
<dbReference type="HOGENOM" id="CLU_046206_1_0_6"/>
<dbReference type="Proteomes" id="UP000000225">
    <property type="component" value="Chromosome"/>
</dbReference>
<dbReference type="GO" id="GO:0043531">
    <property type="term" value="F:ADP binding"/>
    <property type="evidence" value="ECO:0007669"/>
    <property type="project" value="UniProtKB-UniRule"/>
</dbReference>
<dbReference type="GO" id="GO:0005524">
    <property type="term" value="F:ATP binding"/>
    <property type="evidence" value="ECO:0007669"/>
    <property type="project" value="InterPro"/>
</dbReference>
<dbReference type="GO" id="GO:0016776">
    <property type="term" value="F:phosphotransferase activity, phosphate group as acceptor"/>
    <property type="evidence" value="ECO:0007669"/>
    <property type="project" value="UniProtKB-UniRule"/>
</dbReference>
<dbReference type="GO" id="GO:0004674">
    <property type="term" value="F:protein serine/threonine kinase activity"/>
    <property type="evidence" value="ECO:0007669"/>
    <property type="project" value="UniProtKB-UniRule"/>
</dbReference>
<dbReference type="HAMAP" id="MF_01062">
    <property type="entry name" value="PSRP"/>
    <property type="match status" value="1"/>
</dbReference>
<dbReference type="InterPro" id="IPR005177">
    <property type="entry name" value="Kinase-pyrophosphorylase"/>
</dbReference>
<dbReference type="InterPro" id="IPR026530">
    <property type="entry name" value="PSRP"/>
</dbReference>
<dbReference type="NCBIfam" id="NF003742">
    <property type="entry name" value="PRK05339.1"/>
    <property type="match status" value="1"/>
</dbReference>
<dbReference type="PANTHER" id="PTHR31756">
    <property type="entry name" value="PYRUVATE, PHOSPHATE DIKINASE REGULATORY PROTEIN 1, CHLOROPLASTIC"/>
    <property type="match status" value="1"/>
</dbReference>
<dbReference type="PANTHER" id="PTHR31756:SF3">
    <property type="entry name" value="PYRUVATE, PHOSPHATE DIKINASE REGULATORY PROTEIN 1, CHLOROPLASTIC"/>
    <property type="match status" value="1"/>
</dbReference>
<dbReference type="Pfam" id="PF03618">
    <property type="entry name" value="Kinase-PPPase"/>
    <property type="match status" value="1"/>
</dbReference>
<protein>
    <recommendedName>
        <fullName evidence="1">Putative phosphoenolpyruvate synthase regulatory protein</fullName>
        <shortName evidence="1">PEP synthase regulatory protein</shortName>
        <shortName evidence="1">PSRP</shortName>
        <ecNumber evidence="1">2.7.11.33</ecNumber>
        <ecNumber evidence="1">2.7.4.28</ecNumber>
    </recommendedName>
    <alternativeName>
        <fullName evidence="1">Pyruvate, water dikinase regulatory protein</fullName>
    </alternativeName>
</protein>
<evidence type="ECO:0000255" key="1">
    <source>
        <dbReference type="HAMAP-Rule" id="MF_01062"/>
    </source>
</evidence>
<sequence length="270" mass="30784">MHTVFYVSDGTAITAEVFGHAVLSQFPLVFEQVTIPFVETLEKARQVRARIDEQFRQTGLRPILFHTIVDPLVREEVLKAQASGHDFLNTFVSPLEQELGVKAEPRLHRTHGMENRKLYDDRIEAVNFALANDDGITTKEYEEADIILIGVSRCGKTPTSLYLALQFGIRAANYPFIEQDMGALVLPTALKANRHKLFGLTITPQRLHEIRNQRRANSRYSSLEQCEQELASVERLFRQEAIRFLDTSSHSVEEISAKILEATGMRRQLY</sequence>
<accession>A4SNV2</accession>
<proteinExistence type="inferred from homology"/>
<gene>
    <name type="ordered locus">ASA_2545</name>
</gene>
<name>PSRP_AERS4</name>
<keyword id="KW-0418">Kinase</keyword>
<keyword id="KW-0547">Nucleotide-binding</keyword>
<keyword id="KW-0723">Serine/threonine-protein kinase</keyword>
<keyword id="KW-0808">Transferase</keyword>
<feature type="chain" id="PRO_0000316630" description="Putative phosphoenolpyruvate synthase regulatory protein">
    <location>
        <begin position="1"/>
        <end position="270"/>
    </location>
</feature>
<feature type="binding site" evidence="1">
    <location>
        <begin position="150"/>
        <end position="157"/>
    </location>
    <ligand>
        <name>ADP</name>
        <dbReference type="ChEBI" id="CHEBI:456216"/>
    </ligand>
</feature>
<organism>
    <name type="scientific">Aeromonas salmonicida (strain A449)</name>
    <dbReference type="NCBI Taxonomy" id="382245"/>
    <lineage>
        <taxon>Bacteria</taxon>
        <taxon>Pseudomonadati</taxon>
        <taxon>Pseudomonadota</taxon>
        <taxon>Gammaproteobacteria</taxon>
        <taxon>Aeromonadales</taxon>
        <taxon>Aeromonadaceae</taxon>
        <taxon>Aeromonas</taxon>
    </lineage>
</organism>